<dbReference type="TCDB" id="8.B.1.4.1">
    <property type="family name" value="the long (4c-c) scorpion toxin (l-st) superfamily"/>
</dbReference>
<dbReference type="GO" id="GO:0005576">
    <property type="term" value="C:extracellular region"/>
    <property type="evidence" value="ECO:0007669"/>
    <property type="project" value="UniProtKB-SubCell"/>
</dbReference>
<dbReference type="GO" id="GO:0090729">
    <property type="term" value="F:toxin activity"/>
    <property type="evidence" value="ECO:0007669"/>
    <property type="project" value="UniProtKB-KW"/>
</dbReference>
<proteinExistence type="evidence at protein level"/>
<evidence type="ECO:0000255" key="1"/>
<evidence type="ECO:0000269" key="2">
    <source>
    </source>
</evidence>
<evidence type="ECO:0000303" key="3">
    <source>
    </source>
</evidence>
<evidence type="ECO:0000305" key="4"/>
<evidence type="ECO:0000305" key="5">
    <source>
    </source>
</evidence>
<comment type="subcellular location">
    <subcellularLocation>
        <location evidence="2">Secreted</location>
    </subcellularLocation>
</comment>
<comment type="tissue specificity">
    <text evidence="5">Expressed by the venom duct.</text>
</comment>
<comment type="domain">
    <text evidence="4">The cysteine framework is XXII (C-C-C-C-C-C-C-C).</text>
</comment>
<comment type="PTM">
    <text evidence="4">Contains 4 disulfide bonds.</text>
</comment>
<comment type="similarity">
    <text evidence="4">Belongs to the E superfamily.</text>
</comment>
<feature type="signal peptide" evidence="1">
    <location>
        <begin position="1"/>
        <end position="18"/>
    </location>
</feature>
<feature type="propeptide" id="PRO_0000444678" evidence="4">
    <location>
        <begin position="19"/>
        <end position="49"/>
    </location>
</feature>
<feature type="chain" id="PRO_0000444679" description="Conotoxin Mr22.1" evidence="4">
    <location>
        <begin position="50"/>
        <end position="90"/>
    </location>
</feature>
<feature type="modified residue" description="6'-bromotryptophan" evidence="5">
    <location>
        <position position="75"/>
    </location>
</feature>
<reference key="1">
    <citation type="journal article" date="2013" name="Mol. Cell. Proteomics">
        <title>Deep venomics reveals the mechanism for expanded peptide diversity in cone snail venom.</title>
        <authorList>
            <person name="Dutertre S."/>
            <person name="Jin A.H."/>
            <person name="Kaas Q."/>
            <person name="Jones A."/>
            <person name="Alewood P.F."/>
            <person name="Lewis R.J."/>
        </authorList>
    </citation>
    <scope>NUCLEOTIDE SEQUENCE [MRNA]</scope>
    <scope>IDENTIFICATION BY MASS SPECTROMETRY</scope>
    <scope>BROMINATION AT TRP-75</scope>
    <scope>SUBCELLULAR LOCATION</scope>
</reference>
<accession>P0DM16</accession>
<organism>
    <name type="scientific">Conus marmoreus</name>
    <name type="common">Marble cone</name>
    <dbReference type="NCBI Taxonomy" id="42752"/>
    <lineage>
        <taxon>Eukaryota</taxon>
        <taxon>Metazoa</taxon>
        <taxon>Spiralia</taxon>
        <taxon>Lophotrochozoa</taxon>
        <taxon>Mollusca</taxon>
        <taxon>Gastropoda</taxon>
        <taxon>Caenogastropoda</taxon>
        <taxon>Neogastropoda</taxon>
        <taxon>Conoidea</taxon>
        <taxon>Conidae</taxon>
        <taxon>Conus</taxon>
    </lineage>
</organism>
<name>EM1_CONMR</name>
<sequence>MMTRVFFAMFFLMALTEGWPRLYDSDCVRGRNMHITCFKDQTCGLTVKRNGRLNCSLTCSCRRGESCLHGEYIDWDSRGLKVHICPKPWF</sequence>
<keyword id="KW-0102">Bromination</keyword>
<keyword id="KW-0165">Cleavage on pair of basic residues</keyword>
<keyword id="KW-1015">Disulfide bond</keyword>
<keyword id="KW-0964">Secreted</keyword>
<keyword id="KW-0732">Signal</keyword>
<keyword id="KW-0800">Toxin</keyword>
<protein>
    <recommendedName>
        <fullName evidence="4">Conotoxin Mr22.1</fullName>
    </recommendedName>
    <alternativeName>
        <fullName evidence="3">Mr104</fullName>
    </alternativeName>
</protein>